<name>RS9_ANAD2</name>
<organism>
    <name type="scientific">Anaeromyxobacter dehalogenans (strain 2CP-1 / ATCC BAA-258)</name>
    <dbReference type="NCBI Taxonomy" id="455488"/>
    <lineage>
        <taxon>Bacteria</taxon>
        <taxon>Pseudomonadati</taxon>
        <taxon>Myxococcota</taxon>
        <taxon>Myxococcia</taxon>
        <taxon>Myxococcales</taxon>
        <taxon>Cystobacterineae</taxon>
        <taxon>Anaeromyxobacteraceae</taxon>
        <taxon>Anaeromyxobacter</taxon>
    </lineage>
</organism>
<gene>
    <name evidence="1" type="primary">rpsI</name>
    <name type="ordered locus">A2cp1_3517</name>
</gene>
<dbReference type="EMBL" id="CP001359">
    <property type="protein sequence ID" value="ACL66847.1"/>
    <property type="molecule type" value="Genomic_DNA"/>
</dbReference>
<dbReference type="RefSeq" id="WP_011422420.1">
    <property type="nucleotide sequence ID" value="NC_011891.1"/>
</dbReference>
<dbReference type="SMR" id="B8J5I5"/>
<dbReference type="KEGG" id="acp:A2cp1_3517"/>
<dbReference type="HOGENOM" id="CLU_046483_2_1_7"/>
<dbReference type="Proteomes" id="UP000007089">
    <property type="component" value="Chromosome"/>
</dbReference>
<dbReference type="GO" id="GO:0022627">
    <property type="term" value="C:cytosolic small ribosomal subunit"/>
    <property type="evidence" value="ECO:0007669"/>
    <property type="project" value="TreeGrafter"/>
</dbReference>
<dbReference type="GO" id="GO:0003723">
    <property type="term" value="F:RNA binding"/>
    <property type="evidence" value="ECO:0007669"/>
    <property type="project" value="TreeGrafter"/>
</dbReference>
<dbReference type="GO" id="GO:0003735">
    <property type="term" value="F:structural constituent of ribosome"/>
    <property type="evidence" value="ECO:0007669"/>
    <property type="project" value="InterPro"/>
</dbReference>
<dbReference type="GO" id="GO:0006412">
    <property type="term" value="P:translation"/>
    <property type="evidence" value="ECO:0007669"/>
    <property type="project" value="UniProtKB-UniRule"/>
</dbReference>
<dbReference type="FunFam" id="3.30.230.10:FF:000001">
    <property type="entry name" value="30S ribosomal protein S9"/>
    <property type="match status" value="1"/>
</dbReference>
<dbReference type="Gene3D" id="3.30.230.10">
    <property type="match status" value="1"/>
</dbReference>
<dbReference type="HAMAP" id="MF_00532_B">
    <property type="entry name" value="Ribosomal_uS9_B"/>
    <property type="match status" value="1"/>
</dbReference>
<dbReference type="InterPro" id="IPR020568">
    <property type="entry name" value="Ribosomal_Su5_D2-typ_SF"/>
</dbReference>
<dbReference type="InterPro" id="IPR000754">
    <property type="entry name" value="Ribosomal_uS9"/>
</dbReference>
<dbReference type="InterPro" id="IPR023035">
    <property type="entry name" value="Ribosomal_uS9_bac/plastid"/>
</dbReference>
<dbReference type="InterPro" id="IPR020574">
    <property type="entry name" value="Ribosomal_uS9_CS"/>
</dbReference>
<dbReference type="InterPro" id="IPR014721">
    <property type="entry name" value="Ribsml_uS5_D2-typ_fold_subgr"/>
</dbReference>
<dbReference type="NCBIfam" id="NF001099">
    <property type="entry name" value="PRK00132.1"/>
    <property type="match status" value="1"/>
</dbReference>
<dbReference type="PANTHER" id="PTHR21569">
    <property type="entry name" value="RIBOSOMAL PROTEIN S9"/>
    <property type="match status" value="1"/>
</dbReference>
<dbReference type="PANTHER" id="PTHR21569:SF1">
    <property type="entry name" value="SMALL RIBOSOMAL SUBUNIT PROTEIN US9M"/>
    <property type="match status" value="1"/>
</dbReference>
<dbReference type="Pfam" id="PF00380">
    <property type="entry name" value="Ribosomal_S9"/>
    <property type="match status" value="1"/>
</dbReference>
<dbReference type="SUPFAM" id="SSF54211">
    <property type="entry name" value="Ribosomal protein S5 domain 2-like"/>
    <property type="match status" value="1"/>
</dbReference>
<dbReference type="PROSITE" id="PS00360">
    <property type="entry name" value="RIBOSOMAL_S9"/>
    <property type="match status" value="1"/>
</dbReference>
<evidence type="ECO:0000255" key="1">
    <source>
        <dbReference type="HAMAP-Rule" id="MF_00532"/>
    </source>
</evidence>
<evidence type="ECO:0000305" key="2"/>
<protein>
    <recommendedName>
        <fullName evidence="1">Small ribosomal subunit protein uS9</fullName>
    </recommendedName>
    <alternativeName>
        <fullName evidence="2">30S ribosomal protein S9</fullName>
    </alternativeName>
</protein>
<feature type="chain" id="PRO_1000146427" description="Small ribosomal subunit protein uS9">
    <location>
        <begin position="1"/>
        <end position="130"/>
    </location>
</feature>
<reference key="1">
    <citation type="submission" date="2009-01" db="EMBL/GenBank/DDBJ databases">
        <title>Complete sequence of Anaeromyxobacter dehalogenans 2CP-1.</title>
        <authorList>
            <person name="Lucas S."/>
            <person name="Copeland A."/>
            <person name="Lapidus A."/>
            <person name="Glavina del Rio T."/>
            <person name="Dalin E."/>
            <person name="Tice H."/>
            <person name="Bruce D."/>
            <person name="Goodwin L."/>
            <person name="Pitluck S."/>
            <person name="Saunders E."/>
            <person name="Brettin T."/>
            <person name="Detter J.C."/>
            <person name="Han C."/>
            <person name="Larimer F."/>
            <person name="Land M."/>
            <person name="Hauser L."/>
            <person name="Kyrpides N."/>
            <person name="Ovchinnikova G."/>
            <person name="Beliaev A.S."/>
            <person name="Richardson P."/>
        </authorList>
    </citation>
    <scope>NUCLEOTIDE SEQUENCE [LARGE SCALE GENOMIC DNA]</scope>
    <source>
        <strain>2CP-1 / ATCC BAA-258</strain>
    </source>
</reference>
<sequence length="130" mass="14390">MAIQANMTVGRRKEAVARVRLVPGTGNITINGRSMDEYFGRETSKMILVEPLKLVDQMGKLDVFVNAAGGGLSGQAGAIRHGISRALVELNPEYRPVLKKAGFMTRDARAVERKKYGRPGARKRFQFSKR</sequence>
<keyword id="KW-0687">Ribonucleoprotein</keyword>
<keyword id="KW-0689">Ribosomal protein</keyword>
<comment type="similarity">
    <text evidence="1">Belongs to the universal ribosomal protein uS9 family.</text>
</comment>
<proteinExistence type="inferred from homology"/>
<accession>B8J5I5</accession>